<comment type="function">
    <text evidence="1">The RecF protein is involved in DNA metabolism; it is required for DNA replication and normal SOS inducibility. RecF binds preferentially to single-stranded, linear DNA. It also seems to bind ATP.</text>
</comment>
<comment type="subcellular location">
    <subcellularLocation>
        <location evidence="1">Cytoplasm</location>
    </subcellularLocation>
</comment>
<comment type="similarity">
    <text evidence="1">Belongs to the RecF family.</text>
</comment>
<keyword id="KW-0067">ATP-binding</keyword>
<keyword id="KW-0963">Cytoplasm</keyword>
<keyword id="KW-0227">DNA damage</keyword>
<keyword id="KW-0234">DNA repair</keyword>
<keyword id="KW-0235">DNA replication</keyword>
<keyword id="KW-0238">DNA-binding</keyword>
<keyword id="KW-0547">Nucleotide-binding</keyword>
<keyword id="KW-1185">Reference proteome</keyword>
<keyword id="KW-0742">SOS response</keyword>
<gene>
    <name evidence="1" type="primary">recF</name>
    <name type="ordered locus">stu2015</name>
</gene>
<sequence>MWLEKIDIQHFRNYSEASVSFSPHLNIFLGRNAQGKTNILEAIYFLALTRSHRTHLDKELIQFQQNSLKLNGIVHRHSGNLPLEINLSNKGRVTKVNYLKQAKLSDYIGHMTVVLFAPEDLQLVKGSPSLRRKFIDIDLGQIKPVYLSDLSNYNHVLKQRNAYLKSTDKVDINFLSVLDEQLADFGARVIKHRLEFIKQLEEEADGHHSILSNQIERLKISYESNIPIQNSKDIREAFLTILNQNHKRDIFKKNTGVGPHRDDLKFYINDMNASFGSQGQQRSLILSLKMAEIALIKKVTEEFPILLLDDVMSELDNHRQLKLLESIDEEVQTFMTTTSLDHLSNLPPNLKTFLVKNGTIYEKQVD</sequence>
<proteinExistence type="inferred from homology"/>
<organism>
    <name type="scientific">Streptococcus thermophilus (strain ATCC BAA-250 / LMG 18311)</name>
    <dbReference type="NCBI Taxonomy" id="264199"/>
    <lineage>
        <taxon>Bacteria</taxon>
        <taxon>Bacillati</taxon>
        <taxon>Bacillota</taxon>
        <taxon>Bacilli</taxon>
        <taxon>Lactobacillales</taxon>
        <taxon>Streptococcaceae</taxon>
        <taxon>Streptococcus</taxon>
    </lineage>
</organism>
<protein>
    <recommendedName>
        <fullName evidence="1">DNA replication and repair protein RecF</fullName>
    </recommendedName>
</protein>
<name>RECF_STRT2</name>
<dbReference type="EMBL" id="CP000023">
    <property type="protein sequence ID" value="AAV61609.1"/>
    <property type="molecule type" value="Genomic_DNA"/>
</dbReference>
<dbReference type="RefSeq" id="WP_011226706.1">
    <property type="nucleotide sequence ID" value="NC_006448.1"/>
</dbReference>
<dbReference type="SMR" id="Q5M237"/>
<dbReference type="STRING" id="264199.stu2015"/>
<dbReference type="GeneID" id="66899741"/>
<dbReference type="KEGG" id="stl:stu2015"/>
<dbReference type="PATRIC" id="fig|264199.4.peg.1999"/>
<dbReference type="eggNOG" id="COG1195">
    <property type="taxonomic scope" value="Bacteria"/>
</dbReference>
<dbReference type="HOGENOM" id="CLU_040267_0_1_9"/>
<dbReference type="Proteomes" id="UP000001170">
    <property type="component" value="Chromosome"/>
</dbReference>
<dbReference type="GO" id="GO:0005737">
    <property type="term" value="C:cytoplasm"/>
    <property type="evidence" value="ECO:0007669"/>
    <property type="project" value="UniProtKB-SubCell"/>
</dbReference>
<dbReference type="GO" id="GO:0005524">
    <property type="term" value="F:ATP binding"/>
    <property type="evidence" value="ECO:0007669"/>
    <property type="project" value="UniProtKB-UniRule"/>
</dbReference>
<dbReference type="GO" id="GO:0003697">
    <property type="term" value="F:single-stranded DNA binding"/>
    <property type="evidence" value="ECO:0007669"/>
    <property type="project" value="UniProtKB-UniRule"/>
</dbReference>
<dbReference type="GO" id="GO:0006260">
    <property type="term" value="P:DNA replication"/>
    <property type="evidence" value="ECO:0007669"/>
    <property type="project" value="UniProtKB-UniRule"/>
</dbReference>
<dbReference type="GO" id="GO:0000731">
    <property type="term" value="P:DNA synthesis involved in DNA repair"/>
    <property type="evidence" value="ECO:0007669"/>
    <property type="project" value="TreeGrafter"/>
</dbReference>
<dbReference type="GO" id="GO:0006302">
    <property type="term" value="P:double-strand break repair"/>
    <property type="evidence" value="ECO:0007669"/>
    <property type="project" value="TreeGrafter"/>
</dbReference>
<dbReference type="GO" id="GO:0009432">
    <property type="term" value="P:SOS response"/>
    <property type="evidence" value="ECO:0007669"/>
    <property type="project" value="UniProtKB-UniRule"/>
</dbReference>
<dbReference type="CDD" id="cd03242">
    <property type="entry name" value="ABC_RecF"/>
    <property type="match status" value="1"/>
</dbReference>
<dbReference type="Gene3D" id="3.40.50.300">
    <property type="entry name" value="P-loop containing nucleotide triphosphate hydrolases"/>
    <property type="match status" value="1"/>
</dbReference>
<dbReference type="Gene3D" id="1.20.1050.90">
    <property type="entry name" value="RecF/RecN/SMC, N-terminal domain"/>
    <property type="match status" value="1"/>
</dbReference>
<dbReference type="HAMAP" id="MF_00365">
    <property type="entry name" value="RecF"/>
    <property type="match status" value="1"/>
</dbReference>
<dbReference type="InterPro" id="IPR001238">
    <property type="entry name" value="DNA-binding_RecF"/>
</dbReference>
<dbReference type="InterPro" id="IPR018078">
    <property type="entry name" value="DNA-binding_RecF_CS"/>
</dbReference>
<dbReference type="InterPro" id="IPR027417">
    <property type="entry name" value="P-loop_NTPase"/>
</dbReference>
<dbReference type="InterPro" id="IPR003395">
    <property type="entry name" value="RecF/RecN/SMC_N"/>
</dbReference>
<dbReference type="InterPro" id="IPR042174">
    <property type="entry name" value="RecF_2"/>
</dbReference>
<dbReference type="NCBIfam" id="TIGR00611">
    <property type="entry name" value="recf"/>
    <property type="match status" value="1"/>
</dbReference>
<dbReference type="PANTHER" id="PTHR32182">
    <property type="entry name" value="DNA REPLICATION AND REPAIR PROTEIN RECF"/>
    <property type="match status" value="1"/>
</dbReference>
<dbReference type="PANTHER" id="PTHR32182:SF0">
    <property type="entry name" value="DNA REPLICATION AND REPAIR PROTEIN RECF"/>
    <property type="match status" value="1"/>
</dbReference>
<dbReference type="Pfam" id="PF02463">
    <property type="entry name" value="SMC_N"/>
    <property type="match status" value="1"/>
</dbReference>
<dbReference type="SUPFAM" id="SSF52540">
    <property type="entry name" value="P-loop containing nucleoside triphosphate hydrolases"/>
    <property type="match status" value="1"/>
</dbReference>
<dbReference type="PROSITE" id="PS00617">
    <property type="entry name" value="RECF_1"/>
    <property type="match status" value="1"/>
</dbReference>
<dbReference type="PROSITE" id="PS00618">
    <property type="entry name" value="RECF_2"/>
    <property type="match status" value="1"/>
</dbReference>
<evidence type="ECO:0000255" key="1">
    <source>
        <dbReference type="HAMAP-Rule" id="MF_00365"/>
    </source>
</evidence>
<accession>Q5M237</accession>
<feature type="chain" id="PRO_0000236151" description="DNA replication and repair protein RecF">
    <location>
        <begin position="1"/>
        <end position="366"/>
    </location>
</feature>
<feature type="binding site" evidence="1">
    <location>
        <begin position="30"/>
        <end position="37"/>
    </location>
    <ligand>
        <name>ATP</name>
        <dbReference type="ChEBI" id="CHEBI:30616"/>
    </ligand>
</feature>
<reference key="1">
    <citation type="journal article" date="2004" name="Nat. Biotechnol.">
        <title>Complete sequence and comparative genome analysis of the dairy bacterium Streptococcus thermophilus.</title>
        <authorList>
            <person name="Bolotin A."/>
            <person name="Quinquis B."/>
            <person name="Renault P."/>
            <person name="Sorokin A."/>
            <person name="Ehrlich S.D."/>
            <person name="Kulakauskas S."/>
            <person name="Lapidus A."/>
            <person name="Goltsman E."/>
            <person name="Mazur M."/>
            <person name="Pusch G.D."/>
            <person name="Fonstein M."/>
            <person name="Overbeek R."/>
            <person name="Kyprides N."/>
            <person name="Purnelle B."/>
            <person name="Prozzi D."/>
            <person name="Ngui K."/>
            <person name="Masuy D."/>
            <person name="Hancy F."/>
            <person name="Burteau S."/>
            <person name="Boutry M."/>
            <person name="Delcour J."/>
            <person name="Goffeau A."/>
            <person name="Hols P."/>
        </authorList>
    </citation>
    <scope>NUCLEOTIDE SEQUENCE [LARGE SCALE GENOMIC DNA]</scope>
    <source>
        <strain>ATCC BAA-250 / LMG 18311</strain>
    </source>
</reference>